<proteinExistence type="inferred from homology"/>
<comment type="function">
    <text evidence="3">Major role in the synthesis of nucleoside triphosphates other than ATP. The ATP gamma phosphate is transferred to the NDP beta phosphate via a ping-pong mechanism, using a phosphorylated active-site intermediate.</text>
</comment>
<comment type="function">
    <text evidence="1">(Microbial infection) Catalyzes the phosphorylation of dZDP to dZTP, when the bacterium is infected by a phage that produces the substrate for the synthesis of dZTP (2- amino-2'-deoxyadenosine 5'-triphosphate), which is then used by the phage as a DNA polymerase substrate.</text>
</comment>
<comment type="catalytic activity">
    <reaction evidence="2">
        <text>dZDP + ATP = dZTP + ADP</text>
        <dbReference type="Rhea" id="RHEA:67644"/>
        <dbReference type="ChEBI" id="CHEBI:30616"/>
        <dbReference type="ChEBI" id="CHEBI:172929"/>
        <dbReference type="ChEBI" id="CHEBI:172931"/>
        <dbReference type="ChEBI" id="CHEBI:456216"/>
    </reaction>
</comment>
<comment type="catalytic activity">
    <reaction evidence="3">
        <text>a 2'-deoxyribonucleoside 5'-diphosphate + ATP = a 2'-deoxyribonucleoside 5'-triphosphate + ADP</text>
        <dbReference type="Rhea" id="RHEA:44640"/>
        <dbReference type="ChEBI" id="CHEBI:30616"/>
        <dbReference type="ChEBI" id="CHEBI:61560"/>
        <dbReference type="ChEBI" id="CHEBI:73316"/>
        <dbReference type="ChEBI" id="CHEBI:456216"/>
        <dbReference type="EC" id="2.7.4.6"/>
    </reaction>
</comment>
<comment type="catalytic activity">
    <reaction evidence="3">
        <text>a ribonucleoside 5'-diphosphate + ATP = a ribonucleoside 5'-triphosphate + ADP</text>
        <dbReference type="Rhea" id="RHEA:18113"/>
        <dbReference type="ChEBI" id="CHEBI:30616"/>
        <dbReference type="ChEBI" id="CHEBI:57930"/>
        <dbReference type="ChEBI" id="CHEBI:61557"/>
        <dbReference type="ChEBI" id="CHEBI:456216"/>
        <dbReference type="EC" id="2.7.4.6"/>
    </reaction>
</comment>
<comment type="cofactor">
    <cofactor evidence="3">
        <name>Mg(2+)</name>
        <dbReference type="ChEBI" id="CHEBI:18420"/>
    </cofactor>
</comment>
<comment type="pathway">
    <text evidence="2">Purine metabolism.</text>
</comment>
<comment type="subunit">
    <text evidence="3">Homotetramer.</text>
</comment>
<comment type="subcellular location">
    <subcellularLocation>
        <location evidence="3">Cytoplasm</location>
    </subcellularLocation>
</comment>
<comment type="similarity">
    <text evidence="3">Belongs to the NDK family.</text>
</comment>
<keyword id="KW-0067">ATP-binding</keyword>
<keyword id="KW-0963">Cytoplasm</keyword>
<keyword id="KW-0418">Kinase</keyword>
<keyword id="KW-0460">Magnesium</keyword>
<keyword id="KW-0479">Metal-binding</keyword>
<keyword id="KW-0546">Nucleotide metabolism</keyword>
<keyword id="KW-0547">Nucleotide-binding</keyword>
<keyword id="KW-0597">Phosphoprotein</keyword>
<keyword id="KW-0808">Transferase</keyword>
<name>NDK_ACIBT</name>
<accession>A3M207</accession>
<reference key="1">
    <citation type="journal article" date="2007" name="Genes Dev.">
        <title>New insights into Acinetobacter baumannii pathogenesis revealed by high-density pyrosequencing and transposon mutagenesis.</title>
        <authorList>
            <person name="Smith M.G."/>
            <person name="Gianoulis T.A."/>
            <person name="Pukatzki S."/>
            <person name="Mekalanos J.J."/>
            <person name="Ornston L.N."/>
            <person name="Gerstein M."/>
            <person name="Snyder M."/>
        </authorList>
    </citation>
    <scope>NUCLEOTIDE SEQUENCE [LARGE SCALE GENOMIC DNA]</scope>
    <source>
        <strain>ATCC 17978 / DSM 105126 / CIP 53.77 / LMG 1025 / NCDC KC755 / 5377</strain>
    </source>
</reference>
<sequence length="143" mass="15462">MAIERTLSIVKPDAVSKNHIGEIFARFEKAGLKIVATKMKHLSQADAEGFYAEHKERGFFGDLVAFMTSGPVVVSVLEGENAVLAHREILGATNPKEAAPGTIRADFAVSIDENAAHGSDSVASAEREIAYFFADNEICPRTR</sequence>
<feature type="chain" id="PRO_1000192247" description="Nucleoside diphosphate kinase">
    <location>
        <begin position="1"/>
        <end position="143"/>
    </location>
</feature>
<feature type="active site" description="Pros-phosphohistidine intermediate" evidence="3">
    <location>
        <position position="117"/>
    </location>
</feature>
<feature type="binding site" evidence="3">
    <location>
        <position position="11"/>
    </location>
    <ligand>
        <name>ATP</name>
        <dbReference type="ChEBI" id="CHEBI:30616"/>
    </ligand>
</feature>
<feature type="binding site" evidence="3">
    <location>
        <position position="59"/>
    </location>
    <ligand>
        <name>ATP</name>
        <dbReference type="ChEBI" id="CHEBI:30616"/>
    </ligand>
</feature>
<feature type="binding site" evidence="3">
    <location>
        <position position="87"/>
    </location>
    <ligand>
        <name>ATP</name>
        <dbReference type="ChEBI" id="CHEBI:30616"/>
    </ligand>
</feature>
<feature type="binding site" evidence="3">
    <location>
        <position position="93"/>
    </location>
    <ligand>
        <name>ATP</name>
        <dbReference type="ChEBI" id="CHEBI:30616"/>
    </ligand>
</feature>
<feature type="binding site" evidence="3">
    <location>
        <position position="104"/>
    </location>
    <ligand>
        <name>ATP</name>
        <dbReference type="ChEBI" id="CHEBI:30616"/>
    </ligand>
</feature>
<feature type="binding site" evidence="3">
    <location>
        <position position="114"/>
    </location>
    <ligand>
        <name>ATP</name>
        <dbReference type="ChEBI" id="CHEBI:30616"/>
    </ligand>
</feature>
<gene>
    <name evidence="3" type="primary">ndk</name>
    <name type="ordered locus">A1S_0498</name>
</gene>
<dbReference type="EC" id="2.7.4.6" evidence="3"/>
<dbReference type="EMBL" id="CP000521">
    <property type="protein sequence ID" value="ABO10951.2"/>
    <property type="molecule type" value="Genomic_DNA"/>
</dbReference>
<dbReference type="RefSeq" id="WP_000963851.1">
    <property type="nucleotide sequence ID" value="NZ_CP053098.1"/>
</dbReference>
<dbReference type="SMR" id="A3M207"/>
<dbReference type="GeneID" id="92892501"/>
<dbReference type="KEGG" id="acb:A1S_0498"/>
<dbReference type="HOGENOM" id="CLU_060216_8_1_6"/>
<dbReference type="GO" id="GO:0005737">
    <property type="term" value="C:cytoplasm"/>
    <property type="evidence" value="ECO:0007669"/>
    <property type="project" value="UniProtKB-SubCell"/>
</dbReference>
<dbReference type="GO" id="GO:0005524">
    <property type="term" value="F:ATP binding"/>
    <property type="evidence" value="ECO:0007669"/>
    <property type="project" value="UniProtKB-UniRule"/>
</dbReference>
<dbReference type="GO" id="GO:0046872">
    <property type="term" value="F:metal ion binding"/>
    <property type="evidence" value="ECO:0007669"/>
    <property type="project" value="UniProtKB-KW"/>
</dbReference>
<dbReference type="GO" id="GO:0004550">
    <property type="term" value="F:nucleoside diphosphate kinase activity"/>
    <property type="evidence" value="ECO:0007669"/>
    <property type="project" value="UniProtKB-UniRule"/>
</dbReference>
<dbReference type="GO" id="GO:0006241">
    <property type="term" value="P:CTP biosynthetic process"/>
    <property type="evidence" value="ECO:0007669"/>
    <property type="project" value="UniProtKB-UniRule"/>
</dbReference>
<dbReference type="GO" id="GO:0006183">
    <property type="term" value="P:GTP biosynthetic process"/>
    <property type="evidence" value="ECO:0007669"/>
    <property type="project" value="UniProtKB-UniRule"/>
</dbReference>
<dbReference type="GO" id="GO:0006228">
    <property type="term" value="P:UTP biosynthetic process"/>
    <property type="evidence" value="ECO:0007669"/>
    <property type="project" value="UniProtKB-UniRule"/>
</dbReference>
<dbReference type="CDD" id="cd04413">
    <property type="entry name" value="NDPk_I"/>
    <property type="match status" value="1"/>
</dbReference>
<dbReference type="FunFam" id="3.30.70.141:FF:000001">
    <property type="entry name" value="Nucleoside diphosphate kinase"/>
    <property type="match status" value="1"/>
</dbReference>
<dbReference type="Gene3D" id="3.30.70.141">
    <property type="entry name" value="Nucleoside diphosphate kinase-like domain"/>
    <property type="match status" value="1"/>
</dbReference>
<dbReference type="HAMAP" id="MF_00451">
    <property type="entry name" value="NDP_kinase"/>
    <property type="match status" value="1"/>
</dbReference>
<dbReference type="InterPro" id="IPR034907">
    <property type="entry name" value="NDK-like_dom"/>
</dbReference>
<dbReference type="InterPro" id="IPR036850">
    <property type="entry name" value="NDK-like_dom_sf"/>
</dbReference>
<dbReference type="InterPro" id="IPR001564">
    <property type="entry name" value="Nucleoside_diP_kinase"/>
</dbReference>
<dbReference type="InterPro" id="IPR023005">
    <property type="entry name" value="Nucleoside_diP_kinase_AS"/>
</dbReference>
<dbReference type="NCBIfam" id="NF001908">
    <property type="entry name" value="PRK00668.1"/>
    <property type="match status" value="1"/>
</dbReference>
<dbReference type="PANTHER" id="PTHR46161">
    <property type="entry name" value="NUCLEOSIDE DIPHOSPHATE KINASE"/>
    <property type="match status" value="1"/>
</dbReference>
<dbReference type="PANTHER" id="PTHR46161:SF3">
    <property type="entry name" value="NUCLEOSIDE DIPHOSPHATE KINASE DDB_G0292928-RELATED"/>
    <property type="match status" value="1"/>
</dbReference>
<dbReference type="Pfam" id="PF00334">
    <property type="entry name" value="NDK"/>
    <property type="match status" value="1"/>
</dbReference>
<dbReference type="PRINTS" id="PR01243">
    <property type="entry name" value="NUCDPKINASE"/>
</dbReference>
<dbReference type="SMART" id="SM00562">
    <property type="entry name" value="NDK"/>
    <property type="match status" value="1"/>
</dbReference>
<dbReference type="SUPFAM" id="SSF54919">
    <property type="entry name" value="Nucleoside diphosphate kinase, NDK"/>
    <property type="match status" value="1"/>
</dbReference>
<dbReference type="PROSITE" id="PS00469">
    <property type="entry name" value="NDPK"/>
    <property type="match status" value="1"/>
</dbReference>
<dbReference type="PROSITE" id="PS51374">
    <property type="entry name" value="NDPK_LIKE"/>
    <property type="match status" value="1"/>
</dbReference>
<organism>
    <name type="scientific">Acinetobacter baumannii (strain ATCC 17978 / DSM 105126 / CIP 53.77 / LMG 1025 / NCDC KC755 / 5377)</name>
    <dbReference type="NCBI Taxonomy" id="400667"/>
    <lineage>
        <taxon>Bacteria</taxon>
        <taxon>Pseudomonadati</taxon>
        <taxon>Pseudomonadota</taxon>
        <taxon>Gammaproteobacteria</taxon>
        <taxon>Moraxellales</taxon>
        <taxon>Moraxellaceae</taxon>
        <taxon>Acinetobacter</taxon>
        <taxon>Acinetobacter calcoaceticus/baumannii complex</taxon>
    </lineage>
</organism>
<protein>
    <recommendedName>
        <fullName evidence="3">Nucleoside diphosphate kinase</fullName>
        <shortName evidence="3">NDK</shortName>
        <shortName evidence="3">NDP kinase</shortName>
        <ecNumber evidence="3">2.7.4.6</ecNumber>
    </recommendedName>
    <alternativeName>
        <fullName evidence="3">Nucleoside-2-P kinase</fullName>
    </alternativeName>
</protein>
<evidence type="ECO:0000250" key="1">
    <source>
        <dbReference type="UniProtKB" id="Q9KNM4"/>
    </source>
</evidence>
<evidence type="ECO:0000250" key="2">
    <source>
        <dbReference type="UniProtKB" id="Q9KTX4"/>
    </source>
</evidence>
<evidence type="ECO:0000255" key="3">
    <source>
        <dbReference type="HAMAP-Rule" id="MF_00451"/>
    </source>
</evidence>